<accession>P9WPF5</accession>
<accession>L0T8X1</accession>
<accession>P94995</accession>
<accession>Q7D876</accession>
<reference key="1">
    <citation type="journal article" date="1998" name="Nature">
        <title>Deciphering the biology of Mycobacterium tuberculosis from the complete genome sequence.</title>
        <authorList>
            <person name="Cole S.T."/>
            <person name="Brosch R."/>
            <person name="Parkhill J."/>
            <person name="Garnier T."/>
            <person name="Churcher C.M."/>
            <person name="Harris D.E."/>
            <person name="Gordon S.V."/>
            <person name="Eiglmeier K."/>
            <person name="Gas S."/>
            <person name="Barry C.E. III"/>
            <person name="Tekaia F."/>
            <person name="Badcock K."/>
            <person name="Basham D."/>
            <person name="Brown D."/>
            <person name="Chillingworth T."/>
            <person name="Connor R."/>
            <person name="Davies R.M."/>
            <person name="Devlin K."/>
            <person name="Feltwell T."/>
            <person name="Gentles S."/>
            <person name="Hamlin N."/>
            <person name="Holroyd S."/>
            <person name="Hornsby T."/>
            <person name="Jagels K."/>
            <person name="Krogh A."/>
            <person name="McLean J."/>
            <person name="Moule S."/>
            <person name="Murphy L.D."/>
            <person name="Oliver S."/>
            <person name="Osborne J."/>
            <person name="Quail M.A."/>
            <person name="Rajandream M.A."/>
            <person name="Rogers J."/>
            <person name="Rutter S."/>
            <person name="Seeger K."/>
            <person name="Skelton S."/>
            <person name="Squares S."/>
            <person name="Squares R."/>
            <person name="Sulston J.E."/>
            <person name="Taylor K."/>
            <person name="Whitehead S."/>
            <person name="Barrell B.G."/>
        </authorList>
    </citation>
    <scope>NUCLEOTIDE SEQUENCE [LARGE SCALE GENOMIC DNA]</scope>
    <source>
        <strain>ATCC 25618 / H37Rv</strain>
    </source>
</reference>
<reference key="2">
    <citation type="journal article" date="2003" name="J. Bacteriol.">
        <title>Attenuation of Mycobacterium tuberculosis by disruption of a mas-like gene or a chalcone synthase-like gene, which causes deficiency in dimycocerosyl phthiocerol synthesis.</title>
        <authorList>
            <person name="Sirakova T.D."/>
            <person name="Dubey V.S."/>
            <person name="Cynamon M.H."/>
            <person name="Kolattukudy P.E."/>
        </authorList>
    </citation>
    <scope>FUNCTION IN DIM BIOSYNTHESIS</scope>
    <scope>DISRUPTION PHENOTYPE</scope>
    <source>
        <strain>ATCC 25618 / H37Rv</strain>
    </source>
</reference>
<reference key="3">
    <citation type="journal article" date="2011" name="Mol. Cell. Proteomics">
        <title>Proteogenomic analysis of Mycobacterium tuberculosis by high resolution mass spectrometry.</title>
        <authorList>
            <person name="Kelkar D.S."/>
            <person name="Kumar D."/>
            <person name="Kumar P."/>
            <person name="Balakrishnan L."/>
            <person name="Muthusamy B."/>
            <person name="Yadav A.K."/>
            <person name="Shrivastava P."/>
            <person name="Marimuthu A."/>
            <person name="Anand S."/>
            <person name="Sundaram H."/>
            <person name="Kingsbury R."/>
            <person name="Harsha H.C."/>
            <person name="Nair B."/>
            <person name="Prasad T.S."/>
            <person name="Chauhan D.S."/>
            <person name="Katoch K."/>
            <person name="Katoch V.M."/>
            <person name="Kumar P."/>
            <person name="Chaerkady R."/>
            <person name="Ramachandran S."/>
            <person name="Dash D."/>
            <person name="Pandey A."/>
        </authorList>
    </citation>
    <scope>IDENTIFICATION BY MASS SPECTROMETRY [LARGE SCALE ANALYSIS]</scope>
    <source>
        <strain>ATCC 25618 / H37Rv</strain>
    </source>
</reference>
<evidence type="ECO:0000250" key="1"/>
<evidence type="ECO:0000269" key="2">
    <source>
    </source>
</evidence>
<evidence type="ECO:0000305" key="3"/>
<dbReference type="EC" id="2.3.1.-"/>
<dbReference type="EMBL" id="AL123456">
    <property type="protein sequence ID" value="CCP44425.1"/>
    <property type="molecule type" value="Genomic_DNA"/>
</dbReference>
<dbReference type="PIR" id="G70621">
    <property type="entry name" value="G70621"/>
</dbReference>
<dbReference type="RefSeq" id="NP_216176.1">
    <property type="nucleotide sequence ID" value="NC_000962.3"/>
</dbReference>
<dbReference type="RefSeq" id="WP_003408181.1">
    <property type="nucleotide sequence ID" value="NZ_NVQJ01000069.1"/>
</dbReference>
<dbReference type="SMR" id="P9WPF5"/>
<dbReference type="FunCoup" id="P9WPF5">
    <property type="interactions" value="1"/>
</dbReference>
<dbReference type="STRING" id="83332.Rv1660"/>
<dbReference type="PaxDb" id="83332-Rv1660"/>
<dbReference type="DNASU" id="885112"/>
<dbReference type="GeneID" id="885112"/>
<dbReference type="KEGG" id="mtu:Rv1660"/>
<dbReference type="KEGG" id="mtv:RVBD_1660"/>
<dbReference type="TubercuList" id="Rv1660"/>
<dbReference type="eggNOG" id="COG3424">
    <property type="taxonomic scope" value="Bacteria"/>
</dbReference>
<dbReference type="InParanoid" id="P9WPF5"/>
<dbReference type="OrthoDB" id="9786288at2"/>
<dbReference type="PhylomeDB" id="P9WPF5"/>
<dbReference type="UniPathway" id="UPA00094"/>
<dbReference type="Proteomes" id="UP000001584">
    <property type="component" value="Chromosome"/>
</dbReference>
<dbReference type="GO" id="GO:0005886">
    <property type="term" value="C:plasma membrane"/>
    <property type="evidence" value="ECO:0007005"/>
    <property type="project" value="MTBBASE"/>
</dbReference>
<dbReference type="GO" id="GO:0034081">
    <property type="term" value="C:polyketide synthase complex"/>
    <property type="evidence" value="ECO:0000315"/>
    <property type="project" value="UniProtKB"/>
</dbReference>
<dbReference type="GO" id="GO:0016747">
    <property type="term" value="F:acyltransferase activity, transferring groups other than amino-acyl groups"/>
    <property type="evidence" value="ECO:0000318"/>
    <property type="project" value="GO_Central"/>
</dbReference>
<dbReference type="GO" id="GO:0071770">
    <property type="term" value="P:DIM/DIP cell wall layer assembly"/>
    <property type="evidence" value="ECO:0000315"/>
    <property type="project" value="MTBBASE"/>
</dbReference>
<dbReference type="GO" id="GO:0006633">
    <property type="term" value="P:fatty acid biosynthetic process"/>
    <property type="evidence" value="ECO:0007669"/>
    <property type="project" value="UniProtKB-UniPathway"/>
</dbReference>
<dbReference type="GO" id="GO:0008610">
    <property type="term" value="P:lipid biosynthetic process"/>
    <property type="evidence" value="ECO:0000315"/>
    <property type="project" value="MTBBASE"/>
</dbReference>
<dbReference type="GO" id="GO:0030639">
    <property type="term" value="P:polyketide biosynthetic process"/>
    <property type="evidence" value="ECO:0000318"/>
    <property type="project" value="GO_Central"/>
</dbReference>
<dbReference type="CDD" id="cd00831">
    <property type="entry name" value="CHS_like"/>
    <property type="match status" value="1"/>
</dbReference>
<dbReference type="FunFam" id="3.40.47.10:FF:000053">
    <property type="entry name" value="Alpha-pyrone synthesis polyketide synthase"/>
    <property type="match status" value="1"/>
</dbReference>
<dbReference type="FunFam" id="3.40.47.10:FF:000014">
    <property type="entry name" value="Chalcone synthase 1"/>
    <property type="match status" value="1"/>
</dbReference>
<dbReference type="Gene3D" id="3.40.47.10">
    <property type="match status" value="2"/>
</dbReference>
<dbReference type="InterPro" id="IPR012328">
    <property type="entry name" value="Chalcone/stilbene_synt_C"/>
</dbReference>
<dbReference type="InterPro" id="IPR001099">
    <property type="entry name" value="Chalcone/stilbene_synt_N"/>
</dbReference>
<dbReference type="InterPro" id="IPR011141">
    <property type="entry name" value="Polyketide_synthase_type-III"/>
</dbReference>
<dbReference type="InterPro" id="IPR016039">
    <property type="entry name" value="Thiolase-like"/>
</dbReference>
<dbReference type="PANTHER" id="PTHR11877:SF99">
    <property type="entry name" value="1,3,6,8-TETRAHYDROXYNAPHTHALENE SYNTHASE"/>
    <property type="match status" value="1"/>
</dbReference>
<dbReference type="PANTHER" id="PTHR11877">
    <property type="entry name" value="HYDROXYMETHYLGLUTARYL-COA SYNTHASE"/>
    <property type="match status" value="1"/>
</dbReference>
<dbReference type="Pfam" id="PF02797">
    <property type="entry name" value="Chal_sti_synt_C"/>
    <property type="match status" value="1"/>
</dbReference>
<dbReference type="Pfam" id="PF00195">
    <property type="entry name" value="Chal_sti_synt_N"/>
    <property type="match status" value="1"/>
</dbReference>
<dbReference type="PIRSF" id="PIRSF000451">
    <property type="entry name" value="PKS_III"/>
    <property type="match status" value="1"/>
</dbReference>
<dbReference type="SUPFAM" id="SSF53901">
    <property type="entry name" value="Thiolase-like"/>
    <property type="match status" value="1"/>
</dbReference>
<proteinExistence type="evidence at protein level"/>
<feature type="chain" id="PRO_0000406360" description="Polyketide synthase-like Pks10">
    <location>
        <begin position="1"/>
        <end position="353"/>
    </location>
</feature>
<feature type="active site" evidence="1">
    <location>
        <position position="138"/>
    </location>
</feature>
<keyword id="KW-0012">Acyltransferase</keyword>
<keyword id="KW-0276">Fatty acid metabolism</keyword>
<keyword id="KW-0443">Lipid metabolism</keyword>
<keyword id="KW-1185">Reference proteome</keyword>
<keyword id="KW-0808">Transferase</keyword>
<organism>
    <name type="scientific">Mycobacterium tuberculosis (strain ATCC 25618 / H37Rv)</name>
    <dbReference type="NCBI Taxonomy" id="83332"/>
    <lineage>
        <taxon>Bacteria</taxon>
        <taxon>Bacillati</taxon>
        <taxon>Actinomycetota</taxon>
        <taxon>Actinomycetes</taxon>
        <taxon>Mycobacteriales</taxon>
        <taxon>Mycobacteriaceae</taxon>
        <taxon>Mycobacterium</taxon>
        <taxon>Mycobacterium tuberculosis complex</taxon>
    </lineage>
</organism>
<protein>
    <recommendedName>
        <fullName>Polyketide synthase-like Pks10</fullName>
        <ecNumber>2.3.1.-</ecNumber>
    </recommendedName>
    <alternativeName>
        <fullName>Chalcone synthase-like protein</fullName>
        <shortName>CHS-like</shortName>
    </alternativeName>
    <alternativeName>
        <fullName>Polyketide synthase type III Pks10</fullName>
    </alternativeName>
</protein>
<name>PKS10_MYCTU</name>
<comment type="function">
    <text evidence="2">Could catalyze the elongation of hydroxybenzoyl-CoA as well as elongation of the aliphatic precursor involved in the synthesis of phthiocerol dimycocerosate (DIM).</text>
</comment>
<comment type="pathway">
    <text>Lipid metabolism; fatty acid biosynthesis.</text>
</comment>
<comment type="subunit">
    <text evidence="1">Homodimer.</text>
</comment>
<comment type="disruption phenotype">
    <text evidence="2">Abolishes the production of phthiocerol dimycocerosate (DIM) on the cell envelope.</text>
</comment>
<comment type="similarity">
    <text evidence="3">Belongs to the thiolase-like superfamily. Chalcone/stilbene synthases family.</text>
</comment>
<sequence>MSVIAGVFGALPPYRYSQRELTDSFVSIPDFEGYEDIVRQLHASAKVNSRHLVLPLEKYPKLTDFGEANKIFIEKAVDLGVQALAGALDESGLRPEDLDVLITATVTGLAVPSLDARIAGRLGLRADVRRVPLFGLGCVAGAAGVARLHDYLRGAPDGVAALVSVELCSLTYPGYKPTLPGLVGSALFADGAAAVVAAGVKRAQDIGADGPDILDSRSHLYPDSLRTMGYDVGSAGFELVLSRDLAAVVEQYLGNDVTTFLASHGLSTTDVGAWVTHPGGPKIINAITETLDLSPQALELTWRSLGEIGNLSSASVLHVLRDTIAKPPPSGSPGLMIAMGPGFCSELVLLRWH</sequence>
<gene>
    <name type="primary">pks10</name>
    <name type="ordered locus">Rv1660</name>
</gene>